<organism>
    <name type="scientific">Vanderwaltozyma polyspora (strain ATCC 22028 / DSM 70294 / BCRC 21397 / CBS 2163 / NBRC 10782 / NRRL Y-8283 / UCD 57-17)</name>
    <name type="common">Kluyveromyces polysporus</name>
    <dbReference type="NCBI Taxonomy" id="436907"/>
    <lineage>
        <taxon>Eukaryota</taxon>
        <taxon>Fungi</taxon>
        <taxon>Dikarya</taxon>
        <taxon>Ascomycota</taxon>
        <taxon>Saccharomycotina</taxon>
        <taxon>Saccharomycetes</taxon>
        <taxon>Saccharomycetales</taxon>
        <taxon>Saccharomycetaceae</taxon>
        <taxon>Vanderwaltozyma</taxon>
    </lineage>
</organism>
<protein>
    <recommendedName>
        <fullName evidence="1">Methylthioribulose-1-phosphate dehydratase</fullName>
        <shortName evidence="1">MTRu-1-P dehydratase</shortName>
        <ecNumber evidence="1">4.2.1.109</ecNumber>
    </recommendedName>
</protein>
<dbReference type="EC" id="4.2.1.109" evidence="1"/>
<dbReference type="EMBL" id="DS480381">
    <property type="protein sequence ID" value="EDO19183.1"/>
    <property type="molecule type" value="Genomic_DNA"/>
</dbReference>
<dbReference type="RefSeq" id="XP_001647041.1">
    <property type="nucleotide sequence ID" value="XM_001646991.1"/>
</dbReference>
<dbReference type="SMR" id="A7TET7"/>
<dbReference type="FunCoup" id="A7TET7">
    <property type="interactions" value="261"/>
</dbReference>
<dbReference type="STRING" id="436907.A7TET7"/>
<dbReference type="GeneID" id="5547514"/>
<dbReference type="KEGG" id="vpo:Kpol_1050p40"/>
<dbReference type="eggNOG" id="KOG2631">
    <property type="taxonomic scope" value="Eukaryota"/>
</dbReference>
<dbReference type="HOGENOM" id="CLU_006033_4_0_1"/>
<dbReference type="InParanoid" id="A7TET7"/>
<dbReference type="OMA" id="WFPGTSG"/>
<dbReference type="OrthoDB" id="191080at2759"/>
<dbReference type="PhylomeDB" id="A7TET7"/>
<dbReference type="UniPathway" id="UPA00904">
    <property type="reaction ID" value="UER00875"/>
</dbReference>
<dbReference type="Proteomes" id="UP000000267">
    <property type="component" value="Unassembled WGS sequence"/>
</dbReference>
<dbReference type="GO" id="GO:0005737">
    <property type="term" value="C:cytoplasm"/>
    <property type="evidence" value="ECO:0007669"/>
    <property type="project" value="UniProtKB-SubCell"/>
</dbReference>
<dbReference type="GO" id="GO:0046570">
    <property type="term" value="F:methylthioribulose 1-phosphate dehydratase activity"/>
    <property type="evidence" value="ECO:0007669"/>
    <property type="project" value="UniProtKB-UniRule"/>
</dbReference>
<dbReference type="GO" id="GO:0008270">
    <property type="term" value="F:zinc ion binding"/>
    <property type="evidence" value="ECO:0007669"/>
    <property type="project" value="UniProtKB-UniRule"/>
</dbReference>
<dbReference type="GO" id="GO:0019509">
    <property type="term" value="P:L-methionine salvage from methylthioadenosine"/>
    <property type="evidence" value="ECO:0007669"/>
    <property type="project" value="UniProtKB-UniRule"/>
</dbReference>
<dbReference type="FunFam" id="3.40.225.10:FF:000003">
    <property type="entry name" value="Methylthioribulose-1-phosphate dehydratase"/>
    <property type="match status" value="1"/>
</dbReference>
<dbReference type="Gene3D" id="3.40.225.10">
    <property type="entry name" value="Class II aldolase/adducin N-terminal domain"/>
    <property type="match status" value="1"/>
</dbReference>
<dbReference type="HAMAP" id="MF_03116">
    <property type="entry name" value="Salvage_MtnB_euk"/>
    <property type="match status" value="1"/>
</dbReference>
<dbReference type="InterPro" id="IPR001303">
    <property type="entry name" value="Aldolase_II/adducin_N"/>
</dbReference>
<dbReference type="InterPro" id="IPR036409">
    <property type="entry name" value="Aldolase_II/adducin_N_sf"/>
</dbReference>
<dbReference type="InterPro" id="IPR017714">
    <property type="entry name" value="MethylthioRu-1-P_deHdtase_MtnB"/>
</dbReference>
<dbReference type="InterPro" id="IPR027514">
    <property type="entry name" value="Salvage_MtnB_euk"/>
</dbReference>
<dbReference type="NCBIfam" id="TIGR03328">
    <property type="entry name" value="salvage_mtnB"/>
    <property type="match status" value="1"/>
</dbReference>
<dbReference type="PANTHER" id="PTHR10640">
    <property type="entry name" value="METHYLTHIORIBULOSE-1-PHOSPHATE DEHYDRATASE"/>
    <property type="match status" value="1"/>
</dbReference>
<dbReference type="PANTHER" id="PTHR10640:SF7">
    <property type="entry name" value="METHYLTHIORIBULOSE-1-PHOSPHATE DEHYDRATASE"/>
    <property type="match status" value="1"/>
</dbReference>
<dbReference type="Pfam" id="PF00596">
    <property type="entry name" value="Aldolase_II"/>
    <property type="match status" value="1"/>
</dbReference>
<dbReference type="SMART" id="SM01007">
    <property type="entry name" value="Aldolase_II"/>
    <property type="match status" value="1"/>
</dbReference>
<dbReference type="SUPFAM" id="SSF53639">
    <property type="entry name" value="AraD/HMP-PK domain-like"/>
    <property type="match status" value="1"/>
</dbReference>
<accession>A7TET7</accession>
<feature type="chain" id="PRO_0000393855" description="Methylthioribulose-1-phosphate dehydratase">
    <location>
        <begin position="1"/>
        <end position="264"/>
    </location>
</feature>
<feature type="active site" description="Proton donor/acceptor" evidence="1">
    <location>
        <position position="151"/>
    </location>
</feature>
<feature type="binding site" evidence="1">
    <location>
        <position position="110"/>
    </location>
    <ligand>
        <name>substrate</name>
    </ligand>
</feature>
<feature type="binding site" evidence="1">
    <location>
        <position position="128"/>
    </location>
    <ligand>
        <name>Zn(2+)</name>
        <dbReference type="ChEBI" id="CHEBI:29105"/>
    </ligand>
</feature>
<feature type="binding site" evidence="1">
    <location>
        <position position="130"/>
    </location>
    <ligand>
        <name>Zn(2+)</name>
        <dbReference type="ChEBI" id="CHEBI:29105"/>
    </ligand>
</feature>
<feature type="binding site" evidence="1">
    <location>
        <position position="213"/>
    </location>
    <ligand>
        <name>Zn(2+)</name>
        <dbReference type="ChEBI" id="CHEBI:29105"/>
    </ligand>
</feature>
<comment type="function">
    <text evidence="1">Catalyzes the dehydration of methylthioribulose-1-phosphate (MTRu-1-P) into 2,3-diketo-5-methylthiopentyl-1-phosphate (DK-MTP-1-P).</text>
</comment>
<comment type="catalytic activity">
    <reaction evidence="1">
        <text>5-(methylsulfanyl)-D-ribulose 1-phosphate = 5-methylsulfanyl-2,3-dioxopentyl phosphate + H2O</text>
        <dbReference type="Rhea" id="RHEA:15549"/>
        <dbReference type="ChEBI" id="CHEBI:15377"/>
        <dbReference type="ChEBI" id="CHEBI:58548"/>
        <dbReference type="ChEBI" id="CHEBI:58828"/>
        <dbReference type="EC" id="4.2.1.109"/>
    </reaction>
</comment>
<comment type="cofactor">
    <cofactor evidence="1">
        <name>Zn(2+)</name>
        <dbReference type="ChEBI" id="CHEBI:29105"/>
    </cofactor>
    <text evidence="1">Binds 1 zinc ion per subunit.</text>
</comment>
<comment type="pathway">
    <text evidence="1">Amino-acid biosynthesis; L-methionine biosynthesis via salvage pathway; L-methionine from S-methyl-5-thio-alpha-D-ribose 1-phosphate: step 2/6.</text>
</comment>
<comment type="subcellular location">
    <subcellularLocation>
        <location evidence="1">Cytoplasm</location>
    </subcellularLocation>
</comment>
<comment type="similarity">
    <text evidence="1">Belongs to the aldolase class II family. MtnB subfamily.</text>
</comment>
<proteinExistence type="inferred from homology"/>
<reference key="1">
    <citation type="journal article" date="2007" name="Proc. Natl. Acad. Sci. U.S.A.">
        <title>Independent sorting-out of thousands of duplicated gene pairs in two yeast species descended from a whole-genome duplication.</title>
        <authorList>
            <person name="Scannell D.R."/>
            <person name="Frank A.C."/>
            <person name="Conant G.C."/>
            <person name="Byrne K.P."/>
            <person name="Woolfit M."/>
            <person name="Wolfe K.H."/>
        </authorList>
    </citation>
    <scope>NUCLEOTIDE SEQUENCE [LARGE SCALE GENOMIC DNA]</scope>
    <source>
        <strain>ATCC 22028 / DSM 70294 / BCRC 21397 / CBS 2163 / NBRC 10782 / NRRL Y-8283 / UCD 57-17</strain>
    </source>
</reference>
<sequence length="264" mass="30156">MTERSFDSFEVVENGLTEEQILQNPDCLISSHDENHPANVICKLCEQFFHNNWCTGTGGGISIKDPKTNYLYIAPSGVQKEKMKREDLFVLNETGDKCLRKPSMYKPSACTPLFLACYKLRNAGAIIHTHSQHAVMCSLIFKDVFRISNIEQIKAIPSGKIDPVTNKQIALSFFDTLEIPIIENMAHEDQLIDSFHDIFKRWPHTQAIIVRRHGIFVWGSDINKAKIYNEAIDYLMELAVKMYQIGIPPDCGIGEEKRYLEMPM</sequence>
<gene>
    <name evidence="1" type="primary">MDE1</name>
    <name type="ORF">Kpol_1050p40</name>
</gene>
<name>MTNB_VANPO</name>
<keyword id="KW-0028">Amino-acid biosynthesis</keyword>
<keyword id="KW-0963">Cytoplasm</keyword>
<keyword id="KW-0456">Lyase</keyword>
<keyword id="KW-0479">Metal-binding</keyword>
<keyword id="KW-0486">Methionine biosynthesis</keyword>
<keyword id="KW-1185">Reference proteome</keyword>
<keyword id="KW-0862">Zinc</keyword>
<evidence type="ECO:0000255" key="1">
    <source>
        <dbReference type="HAMAP-Rule" id="MF_03116"/>
    </source>
</evidence>